<keyword id="KW-0963">Cytoplasm</keyword>
<keyword id="KW-0460">Magnesium</keyword>
<keyword id="KW-0479">Metal-binding</keyword>
<keyword id="KW-0548">Nucleotidyltransferase</keyword>
<keyword id="KW-1185">Reference proteome</keyword>
<keyword id="KW-0694">RNA-binding</keyword>
<keyword id="KW-0808">Transferase</keyword>
<sequence length="712" mass="76329">MNPIVKSFQYGQHTVTLETGVMARQATAAVMVSMDDTCVFVTVVGKKEADHGRDFFPLTVNYQERTYAAGRIPGGFFRREGRPSEGETLISRLIDRPIRPLFPEGFLNEVQVVATVMSVNPAVSPDIVAMIGASAALAISGIPFGGPIGAARVGYMNGQYVLNPTTTELPQSDLDLVVAGTANAVLMVESEAAILSEEVMLGAVVFGHEQMQAVINAINEFAADVGTKPWNWTAPAVNEALKAKVAELATAELGEAYRITEKAVRYETIGAIKARVVEQVIASGVEEDAKKIGEEFHSLESRIVRGRVVRGEPRIDGRDPEMIRALSVATGVLPRAHGSALFTRGETQAMVVATLGTERDAQNIDELTGNRADRFMLHYNFPPYCVGETGMMGSPKRREIGHGRLAKRGVAAVMPSADEFPYVVRVVSEITESNGSSSMASVCGSSLALMDAGVPIKASVAGIAMGLVKEEEGFVVLSDILGDEDHLGDMDFKVAGTTEGVTALQMDIKIEGITKEIMEIALKQARGARLHILKVMDEAIQAPRAEISDFAPRIHTIKINPEKIKDVIGKGGSVIRALTEETGTNIELDDDGTVRIAAVDGDAAKEAIRRIEAITAEIEVNRIYEGKVVRLADFGAFVNILPGKDGLVHISQITDARVQNVADYLKIGDVVKVKVLEVDRQGRVRLSIKEANAPTEAAAEPAVAAVEEPAAE</sequence>
<gene>
    <name evidence="1" type="primary">pnp</name>
    <name type="ordered locus">AHA_3299</name>
</gene>
<feature type="chain" id="PRO_0000329486" description="Polyribonucleotide nucleotidyltransferase">
    <location>
        <begin position="1"/>
        <end position="712"/>
    </location>
</feature>
<feature type="domain" description="KH" evidence="1">
    <location>
        <begin position="552"/>
        <end position="615"/>
    </location>
</feature>
<feature type="domain" description="S1 motif" evidence="1">
    <location>
        <begin position="621"/>
        <end position="689"/>
    </location>
</feature>
<feature type="binding site" evidence="1">
    <location>
        <position position="485"/>
    </location>
    <ligand>
        <name>Mg(2+)</name>
        <dbReference type="ChEBI" id="CHEBI:18420"/>
    </ligand>
</feature>
<feature type="binding site" evidence="1">
    <location>
        <position position="491"/>
    </location>
    <ligand>
        <name>Mg(2+)</name>
        <dbReference type="ChEBI" id="CHEBI:18420"/>
    </ligand>
</feature>
<name>PNP_AERHH</name>
<protein>
    <recommendedName>
        <fullName evidence="1">Polyribonucleotide nucleotidyltransferase</fullName>
        <ecNumber evidence="1">2.7.7.8</ecNumber>
    </recommendedName>
    <alternativeName>
        <fullName evidence="1">Polynucleotide phosphorylase</fullName>
        <shortName evidence="1">PNPase</shortName>
    </alternativeName>
</protein>
<organism>
    <name type="scientific">Aeromonas hydrophila subsp. hydrophila (strain ATCC 7966 / DSM 30187 / BCRC 13018 / CCUG 14551 / JCM 1027 / KCTC 2358 / NCIMB 9240 / NCTC 8049)</name>
    <dbReference type="NCBI Taxonomy" id="380703"/>
    <lineage>
        <taxon>Bacteria</taxon>
        <taxon>Pseudomonadati</taxon>
        <taxon>Pseudomonadota</taxon>
        <taxon>Gammaproteobacteria</taxon>
        <taxon>Aeromonadales</taxon>
        <taxon>Aeromonadaceae</taxon>
        <taxon>Aeromonas</taxon>
    </lineage>
</organism>
<accession>A0KND9</accession>
<evidence type="ECO:0000255" key="1">
    <source>
        <dbReference type="HAMAP-Rule" id="MF_01595"/>
    </source>
</evidence>
<comment type="function">
    <text evidence="1">Involved in mRNA degradation. Catalyzes the phosphorolysis of single-stranded polyribonucleotides processively in the 3'- to 5'-direction.</text>
</comment>
<comment type="catalytic activity">
    <reaction evidence="1">
        <text>RNA(n+1) + phosphate = RNA(n) + a ribonucleoside 5'-diphosphate</text>
        <dbReference type="Rhea" id="RHEA:22096"/>
        <dbReference type="Rhea" id="RHEA-COMP:14527"/>
        <dbReference type="Rhea" id="RHEA-COMP:17342"/>
        <dbReference type="ChEBI" id="CHEBI:43474"/>
        <dbReference type="ChEBI" id="CHEBI:57930"/>
        <dbReference type="ChEBI" id="CHEBI:140395"/>
        <dbReference type="EC" id="2.7.7.8"/>
    </reaction>
</comment>
<comment type="cofactor">
    <cofactor evidence="1">
        <name>Mg(2+)</name>
        <dbReference type="ChEBI" id="CHEBI:18420"/>
    </cofactor>
</comment>
<comment type="subunit">
    <text evidence="1">Component of the RNA degradosome, which is a multiprotein complex involved in RNA processing and mRNA degradation.</text>
</comment>
<comment type="subcellular location">
    <subcellularLocation>
        <location evidence="1">Cytoplasm</location>
    </subcellularLocation>
</comment>
<comment type="similarity">
    <text evidence="1">Belongs to the polyribonucleotide nucleotidyltransferase family.</text>
</comment>
<dbReference type="EC" id="2.7.7.8" evidence="1"/>
<dbReference type="EMBL" id="CP000462">
    <property type="protein sequence ID" value="ABK36580.1"/>
    <property type="molecule type" value="Genomic_DNA"/>
</dbReference>
<dbReference type="RefSeq" id="WP_011707071.1">
    <property type="nucleotide sequence ID" value="NC_008570.1"/>
</dbReference>
<dbReference type="RefSeq" id="YP_857790.1">
    <property type="nucleotide sequence ID" value="NC_008570.1"/>
</dbReference>
<dbReference type="SMR" id="A0KND9"/>
<dbReference type="STRING" id="380703.AHA_3299"/>
<dbReference type="EnsemblBacteria" id="ABK36580">
    <property type="protein sequence ID" value="ABK36580"/>
    <property type="gene ID" value="AHA_3299"/>
</dbReference>
<dbReference type="GeneID" id="4490961"/>
<dbReference type="KEGG" id="aha:AHA_3299"/>
<dbReference type="PATRIC" id="fig|380703.7.peg.3295"/>
<dbReference type="eggNOG" id="COG1185">
    <property type="taxonomic scope" value="Bacteria"/>
</dbReference>
<dbReference type="HOGENOM" id="CLU_004217_2_2_6"/>
<dbReference type="OrthoDB" id="9804305at2"/>
<dbReference type="Proteomes" id="UP000000756">
    <property type="component" value="Chromosome"/>
</dbReference>
<dbReference type="GO" id="GO:0005829">
    <property type="term" value="C:cytosol"/>
    <property type="evidence" value="ECO:0007669"/>
    <property type="project" value="TreeGrafter"/>
</dbReference>
<dbReference type="GO" id="GO:0000175">
    <property type="term" value="F:3'-5'-RNA exonuclease activity"/>
    <property type="evidence" value="ECO:0007669"/>
    <property type="project" value="TreeGrafter"/>
</dbReference>
<dbReference type="GO" id="GO:0000287">
    <property type="term" value="F:magnesium ion binding"/>
    <property type="evidence" value="ECO:0007669"/>
    <property type="project" value="UniProtKB-UniRule"/>
</dbReference>
<dbReference type="GO" id="GO:0004654">
    <property type="term" value="F:polyribonucleotide nucleotidyltransferase activity"/>
    <property type="evidence" value="ECO:0007669"/>
    <property type="project" value="UniProtKB-UniRule"/>
</dbReference>
<dbReference type="GO" id="GO:0003723">
    <property type="term" value="F:RNA binding"/>
    <property type="evidence" value="ECO:0007669"/>
    <property type="project" value="UniProtKB-UniRule"/>
</dbReference>
<dbReference type="GO" id="GO:0006402">
    <property type="term" value="P:mRNA catabolic process"/>
    <property type="evidence" value="ECO:0007669"/>
    <property type="project" value="UniProtKB-UniRule"/>
</dbReference>
<dbReference type="GO" id="GO:0006396">
    <property type="term" value="P:RNA processing"/>
    <property type="evidence" value="ECO:0007669"/>
    <property type="project" value="InterPro"/>
</dbReference>
<dbReference type="CDD" id="cd02393">
    <property type="entry name" value="KH-I_PNPase"/>
    <property type="match status" value="1"/>
</dbReference>
<dbReference type="CDD" id="cd11363">
    <property type="entry name" value="RNase_PH_PNPase_1"/>
    <property type="match status" value="1"/>
</dbReference>
<dbReference type="CDD" id="cd11364">
    <property type="entry name" value="RNase_PH_PNPase_2"/>
    <property type="match status" value="1"/>
</dbReference>
<dbReference type="CDD" id="cd04472">
    <property type="entry name" value="S1_PNPase"/>
    <property type="match status" value="1"/>
</dbReference>
<dbReference type="FunFam" id="2.40.50.140:FF:000023">
    <property type="entry name" value="Polyribonucleotide nucleotidyltransferase"/>
    <property type="match status" value="1"/>
</dbReference>
<dbReference type="FunFam" id="3.30.1370.10:FF:000001">
    <property type="entry name" value="Polyribonucleotide nucleotidyltransferase"/>
    <property type="match status" value="1"/>
</dbReference>
<dbReference type="FunFam" id="3.30.230.70:FF:000001">
    <property type="entry name" value="Polyribonucleotide nucleotidyltransferase"/>
    <property type="match status" value="1"/>
</dbReference>
<dbReference type="FunFam" id="3.30.230.70:FF:000002">
    <property type="entry name" value="Polyribonucleotide nucleotidyltransferase"/>
    <property type="match status" value="1"/>
</dbReference>
<dbReference type="Gene3D" id="3.30.230.70">
    <property type="entry name" value="GHMP Kinase, N-terminal domain"/>
    <property type="match status" value="2"/>
</dbReference>
<dbReference type="Gene3D" id="3.30.1370.10">
    <property type="entry name" value="K Homology domain, type 1"/>
    <property type="match status" value="1"/>
</dbReference>
<dbReference type="Gene3D" id="2.40.50.140">
    <property type="entry name" value="Nucleic acid-binding proteins"/>
    <property type="match status" value="1"/>
</dbReference>
<dbReference type="HAMAP" id="MF_01595">
    <property type="entry name" value="PNPase"/>
    <property type="match status" value="1"/>
</dbReference>
<dbReference type="InterPro" id="IPR001247">
    <property type="entry name" value="ExoRNase_PH_dom1"/>
</dbReference>
<dbReference type="InterPro" id="IPR015847">
    <property type="entry name" value="ExoRNase_PH_dom2"/>
</dbReference>
<dbReference type="InterPro" id="IPR036345">
    <property type="entry name" value="ExoRNase_PH_dom2_sf"/>
</dbReference>
<dbReference type="InterPro" id="IPR004087">
    <property type="entry name" value="KH_dom"/>
</dbReference>
<dbReference type="InterPro" id="IPR004088">
    <property type="entry name" value="KH_dom_type_1"/>
</dbReference>
<dbReference type="InterPro" id="IPR036612">
    <property type="entry name" value="KH_dom_type_1_sf"/>
</dbReference>
<dbReference type="InterPro" id="IPR012340">
    <property type="entry name" value="NA-bd_OB-fold"/>
</dbReference>
<dbReference type="InterPro" id="IPR012162">
    <property type="entry name" value="PNPase"/>
</dbReference>
<dbReference type="InterPro" id="IPR027408">
    <property type="entry name" value="PNPase/RNase_PH_dom_sf"/>
</dbReference>
<dbReference type="InterPro" id="IPR015848">
    <property type="entry name" value="PNPase_PH_RNA-bd_bac/org-type"/>
</dbReference>
<dbReference type="InterPro" id="IPR036456">
    <property type="entry name" value="PNPase_PH_RNA-bd_sf"/>
</dbReference>
<dbReference type="InterPro" id="IPR020568">
    <property type="entry name" value="Ribosomal_Su5_D2-typ_SF"/>
</dbReference>
<dbReference type="InterPro" id="IPR003029">
    <property type="entry name" value="S1_domain"/>
</dbReference>
<dbReference type="NCBIfam" id="TIGR03591">
    <property type="entry name" value="polynuc_phos"/>
    <property type="match status" value="1"/>
</dbReference>
<dbReference type="NCBIfam" id="NF008805">
    <property type="entry name" value="PRK11824.1"/>
    <property type="match status" value="1"/>
</dbReference>
<dbReference type="PANTHER" id="PTHR11252">
    <property type="entry name" value="POLYRIBONUCLEOTIDE NUCLEOTIDYLTRANSFERASE"/>
    <property type="match status" value="1"/>
</dbReference>
<dbReference type="PANTHER" id="PTHR11252:SF0">
    <property type="entry name" value="POLYRIBONUCLEOTIDE NUCLEOTIDYLTRANSFERASE 1, MITOCHONDRIAL"/>
    <property type="match status" value="1"/>
</dbReference>
<dbReference type="Pfam" id="PF00013">
    <property type="entry name" value="KH_1"/>
    <property type="match status" value="1"/>
</dbReference>
<dbReference type="Pfam" id="PF03726">
    <property type="entry name" value="PNPase"/>
    <property type="match status" value="1"/>
</dbReference>
<dbReference type="Pfam" id="PF01138">
    <property type="entry name" value="RNase_PH"/>
    <property type="match status" value="2"/>
</dbReference>
<dbReference type="Pfam" id="PF03725">
    <property type="entry name" value="RNase_PH_C"/>
    <property type="match status" value="2"/>
</dbReference>
<dbReference type="Pfam" id="PF00575">
    <property type="entry name" value="S1"/>
    <property type="match status" value="1"/>
</dbReference>
<dbReference type="PIRSF" id="PIRSF005499">
    <property type="entry name" value="PNPase"/>
    <property type="match status" value="1"/>
</dbReference>
<dbReference type="SMART" id="SM00322">
    <property type="entry name" value="KH"/>
    <property type="match status" value="1"/>
</dbReference>
<dbReference type="SMART" id="SM00316">
    <property type="entry name" value="S1"/>
    <property type="match status" value="1"/>
</dbReference>
<dbReference type="SUPFAM" id="SSF54791">
    <property type="entry name" value="Eukaryotic type KH-domain (KH-domain type I)"/>
    <property type="match status" value="1"/>
</dbReference>
<dbReference type="SUPFAM" id="SSF50249">
    <property type="entry name" value="Nucleic acid-binding proteins"/>
    <property type="match status" value="1"/>
</dbReference>
<dbReference type="SUPFAM" id="SSF46915">
    <property type="entry name" value="Polynucleotide phosphorylase/guanosine pentaphosphate synthase (PNPase/GPSI), domain 3"/>
    <property type="match status" value="1"/>
</dbReference>
<dbReference type="SUPFAM" id="SSF55666">
    <property type="entry name" value="Ribonuclease PH domain 2-like"/>
    <property type="match status" value="2"/>
</dbReference>
<dbReference type="SUPFAM" id="SSF54211">
    <property type="entry name" value="Ribosomal protein S5 domain 2-like"/>
    <property type="match status" value="2"/>
</dbReference>
<dbReference type="PROSITE" id="PS50084">
    <property type="entry name" value="KH_TYPE_1"/>
    <property type="match status" value="1"/>
</dbReference>
<dbReference type="PROSITE" id="PS50126">
    <property type="entry name" value="S1"/>
    <property type="match status" value="1"/>
</dbReference>
<reference key="1">
    <citation type="journal article" date="2006" name="J. Bacteriol.">
        <title>Genome sequence of Aeromonas hydrophila ATCC 7966T: jack of all trades.</title>
        <authorList>
            <person name="Seshadri R."/>
            <person name="Joseph S.W."/>
            <person name="Chopra A.K."/>
            <person name="Sha J."/>
            <person name="Shaw J."/>
            <person name="Graf J."/>
            <person name="Haft D.H."/>
            <person name="Wu M."/>
            <person name="Ren Q."/>
            <person name="Rosovitz M.J."/>
            <person name="Madupu R."/>
            <person name="Tallon L."/>
            <person name="Kim M."/>
            <person name="Jin S."/>
            <person name="Vuong H."/>
            <person name="Stine O.C."/>
            <person name="Ali A."/>
            <person name="Horneman A.J."/>
            <person name="Heidelberg J.F."/>
        </authorList>
    </citation>
    <scope>NUCLEOTIDE SEQUENCE [LARGE SCALE GENOMIC DNA]</scope>
    <source>
        <strain>ATCC 7966 / DSM 30187 / BCRC 13018 / CCUG 14551 / JCM 1027 / KCTC 2358 / NCIMB 9240 / NCTC 8049</strain>
    </source>
</reference>
<proteinExistence type="inferred from homology"/>